<name>NMAD1_CAEEL</name>
<proteinExistence type="evidence at protein level"/>
<feature type="chain" id="PRO_0000433612" description="DNA N6-methyl adenine demethylase">
    <location>
        <begin position="1"/>
        <end position="291"/>
    </location>
</feature>
<feature type="domain" description="Fe2OG dioxygenase" evidence="2">
    <location>
        <begin position="85"/>
        <end position="256"/>
    </location>
</feature>
<feature type="binding site" evidence="1">
    <location>
        <begin position="171"/>
        <end position="173"/>
    </location>
    <ligand>
        <name>2-oxoglutarate</name>
        <dbReference type="ChEBI" id="CHEBI:16810"/>
    </ligand>
</feature>
<feature type="binding site" evidence="1 2">
    <location>
        <position position="184"/>
    </location>
    <ligand>
        <name>Fe cation</name>
        <dbReference type="ChEBI" id="CHEBI:24875"/>
        <note>catalytic</note>
    </ligand>
</feature>
<feature type="binding site" evidence="1 2">
    <location>
        <position position="186"/>
    </location>
    <ligand>
        <name>Fe cation</name>
        <dbReference type="ChEBI" id="CHEBI:24875"/>
        <note>catalytic</note>
    </ligand>
</feature>
<feature type="binding site" evidence="1 2">
    <location>
        <position position="239"/>
    </location>
    <ligand>
        <name>Fe cation</name>
        <dbReference type="ChEBI" id="CHEBI:24875"/>
        <note>catalytic</note>
    </ligand>
</feature>
<feature type="splice variant" id="VSP_057825" description="In isoform b." evidence="6">
    <original>SINLINGSVMTL</original>
    <variation>RYEFLFKKVLFN</variation>
    <location>
        <begin position="197"/>
        <end position="208"/>
    </location>
</feature>
<feature type="splice variant" id="VSP_057826" description="In isoform b." evidence="6">
    <location>
        <begin position="209"/>
        <end position="291"/>
    </location>
</feature>
<feature type="mutagenesis site" description="Abolishes ability to demethylate m6A DNA in vitro. Reduces fertility and results in a high proportion of male progeny (also known as a Him phenotype). Defective DNA replication and aberrant rad-51 expression in germline nuclei indicative of defective DNA damage repair mechanisms. No change in phosphorylation levels of histone H3 'Ser-10'." evidence="3 4">
    <original>D</original>
    <variation>A</variation>
    <location>
        <position position="186"/>
    </location>
</feature>
<feature type="helix" evidence="11">
    <location>
        <begin position="34"/>
        <end position="37"/>
    </location>
</feature>
<feature type="strand" evidence="11">
    <location>
        <begin position="38"/>
        <end position="44"/>
    </location>
</feature>
<feature type="turn" evidence="11">
    <location>
        <begin position="45"/>
        <end position="48"/>
    </location>
</feature>
<feature type="strand" evidence="11">
    <location>
        <begin position="49"/>
        <end position="52"/>
    </location>
</feature>
<feature type="helix" evidence="11">
    <location>
        <begin position="62"/>
        <end position="71"/>
    </location>
</feature>
<feature type="helix" evidence="11">
    <location>
        <begin position="72"/>
        <end position="74"/>
    </location>
</feature>
<feature type="strand" evidence="11">
    <location>
        <begin position="86"/>
        <end position="89"/>
    </location>
</feature>
<feature type="helix" evidence="11">
    <location>
        <begin position="95"/>
        <end position="105"/>
    </location>
</feature>
<feature type="helix" evidence="11">
    <location>
        <begin position="114"/>
        <end position="116"/>
    </location>
</feature>
<feature type="strand" evidence="11">
    <location>
        <begin position="118"/>
        <end position="123"/>
    </location>
</feature>
<feature type="strand" evidence="11">
    <location>
        <begin position="125"/>
        <end position="127"/>
    </location>
</feature>
<feature type="turn" evidence="11">
    <location>
        <begin position="128"/>
        <end position="131"/>
    </location>
</feature>
<feature type="strand" evidence="11">
    <location>
        <begin position="132"/>
        <end position="134"/>
    </location>
</feature>
<feature type="helix" evidence="11">
    <location>
        <begin position="145"/>
        <end position="155"/>
    </location>
</feature>
<feature type="helix" evidence="11">
    <location>
        <begin position="157"/>
        <end position="160"/>
    </location>
</feature>
<feature type="strand" evidence="11">
    <location>
        <begin position="165"/>
        <end position="174"/>
    </location>
</feature>
<feature type="helix" evidence="11">
    <location>
        <begin position="175"/>
        <end position="177"/>
    </location>
</feature>
<feature type="strand" evidence="11">
    <location>
        <begin position="181"/>
        <end position="184"/>
    </location>
</feature>
<feature type="strand" evidence="11">
    <location>
        <begin position="188"/>
        <end position="202"/>
    </location>
</feature>
<feature type="strand" evidence="11">
    <location>
        <begin position="204"/>
        <end position="210"/>
    </location>
</feature>
<feature type="turn" evidence="11">
    <location>
        <begin position="211"/>
        <end position="214"/>
    </location>
</feature>
<feature type="strand" evidence="11">
    <location>
        <begin position="215"/>
        <end position="221"/>
    </location>
</feature>
<feature type="strand" evidence="11">
    <location>
        <begin position="226"/>
        <end position="229"/>
    </location>
</feature>
<feature type="helix" evidence="11">
    <location>
        <begin position="231"/>
        <end position="235"/>
    </location>
</feature>
<feature type="strand" evidence="11">
    <location>
        <begin position="238"/>
        <end position="241"/>
    </location>
</feature>
<feature type="helix" evidence="11">
    <location>
        <begin position="243"/>
        <end position="245"/>
    </location>
</feature>
<feature type="strand" evidence="11">
    <location>
        <begin position="248"/>
        <end position="258"/>
    </location>
</feature>
<feature type="turn" evidence="11">
    <location>
        <begin position="260"/>
        <end position="262"/>
    </location>
</feature>
<feature type="strand" evidence="11">
    <location>
        <begin position="266"/>
        <end position="268"/>
    </location>
</feature>
<feature type="turn" evidence="11">
    <location>
        <begin position="269"/>
        <end position="272"/>
    </location>
</feature>
<feature type="helix" evidence="11">
    <location>
        <begin position="273"/>
        <end position="281"/>
    </location>
</feature>
<feature type="strand" evidence="11">
    <location>
        <begin position="282"/>
        <end position="284"/>
    </location>
</feature>
<sequence>MGSAEQACGCKGARFCALCETTERVKKLRVVEDKHVNYKVFIYDHIRQIAIPTTNLNSQSSLEDIIDESTSCQSVSTDGSIEIDGLTLIHNFLSESEESKILNMIDTVEWAQSQSGRRKQDYGPKVNFKHKKVKTDTFVGMPEYADMLLNKMSEYDVKKLGNYQPFEMCNLEYEEVKKSAIEMHQDDMWIWGNRLISINLINGSVMTLSNDNKSFLCYVHMPHRSLLCMADECRYDWKHGVLAHHIRGRRIALTMREAAKDFAEGGELYEKYGAELIRLGNIRVPLSKTSV</sequence>
<organism>
    <name type="scientific">Caenorhabditis elegans</name>
    <dbReference type="NCBI Taxonomy" id="6239"/>
    <lineage>
        <taxon>Eukaryota</taxon>
        <taxon>Metazoa</taxon>
        <taxon>Ecdysozoa</taxon>
        <taxon>Nematoda</taxon>
        <taxon>Chromadorea</taxon>
        <taxon>Rhabditida</taxon>
        <taxon>Rhabditina</taxon>
        <taxon>Rhabditomorpha</taxon>
        <taxon>Rhabditoidea</taxon>
        <taxon>Rhabditidae</taxon>
        <taxon>Peloderinae</taxon>
        <taxon>Caenorhabditis</taxon>
    </lineage>
</organism>
<reference key="1">
    <citation type="journal article" date="1998" name="Science">
        <title>Genome sequence of the nematode C. elegans: a platform for investigating biology.</title>
        <authorList>
            <consortium name="The C. elegans sequencing consortium"/>
        </authorList>
    </citation>
    <scope>NUCLEOTIDE SEQUENCE [LARGE SCALE GENOMIC DNA]</scope>
    <source>
        <strain>Bristol N2</strain>
    </source>
</reference>
<reference key="2">
    <citation type="journal article" date="2015" name="Cell">
        <title>DNA Methylation on N(6)-Adenine in C. elegans.</title>
        <authorList>
            <person name="Greer E.L."/>
            <person name="Blanco M.A."/>
            <person name="Gu L."/>
            <person name="Sendinc E."/>
            <person name="Liu J."/>
            <person name="Aristizabal-Corrales D."/>
            <person name="Hsu C.H."/>
            <person name="Aravind L."/>
            <person name="He C."/>
            <person name="Shi Y."/>
        </authorList>
    </citation>
    <scope>FUNCTION</scope>
    <scope>DISRUPTION PHENOTYPE</scope>
    <scope>MUTAGENESIS OF ASP-186</scope>
</reference>
<reference key="3">
    <citation type="journal article" date="2019" name="PLoS Genet.">
        <title>The demethylase NMAD-1 regulates DNA replication and repair in the Caenorhabditis elegans germline.</title>
        <authorList>
            <person name="Wang S.Y."/>
            <person name="Mao H."/>
            <person name="Shibuya H."/>
            <person name="Uzawa S."/>
            <person name="O'Brown Z.K."/>
            <person name="Wesenberg S."/>
            <person name="Shin N."/>
            <person name="Saito T.T."/>
            <person name="Gao J."/>
            <person name="Meyer B.J."/>
            <person name="Colaiacovo M.P."/>
            <person name="Greer E.L."/>
        </authorList>
    </citation>
    <scope>FUNCTION</scope>
    <scope>INTERACTION WITH TOP-2; MTSS-1; HIS-24; ULE-3; C18B2.3; PGL-1; CEH-93; MCM-4 AND F37C4.5</scope>
    <scope>SUBCELLULAR LOCATION</scope>
    <scope>MUTAGENESIS OF ASP-186</scope>
</reference>
<accession>Q8MNT9</accession>
<accession>Q8MNT8</accession>
<dbReference type="EC" id="1.14.11.51" evidence="7"/>
<dbReference type="EMBL" id="BX284603">
    <property type="protein sequence ID" value="CCD68390.1"/>
    <property type="molecule type" value="Genomic_DNA"/>
</dbReference>
<dbReference type="EMBL" id="BX284603">
    <property type="protein sequence ID" value="CCD68391.1"/>
    <property type="molecule type" value="Genomic_DNA"/>
</dbReference>
<dbReference type="RefSeq" id="NP_741141.1">
    <molecule id="Q8MNT9-1"/>
    <property type="nucleotide sequence ID" value="NM_171124.5"/>
</dbReference>
<dbReference type="RefSeq" id="NP_741142.1">
    <molecule id="Q8MNT9-2"/>
    <property type="nucleotide sequence ID" value="NM_171125.5"/>
</dbReference>
<dbReference type="PDB" id="8H68">
    <property type="method" value="X-ray"/>
    <property type="resolution" value="2.20 A"/>
    <property type="chains" value="A=32-291"/>
</dbReference>
<dbReference type="PDB" id="8HAZ">
    <property type="method" value="X-ray"/>
    <property type="resolution" value="2.66 A"/>
    <property type="chains" value="A=21-263"/>
</dbReference>
<dbReference type="PDB" id="8HB2">
    <property type="method" value="X-ray"/>
    <property type="resolution" value="3.06 A"/>
    <property type="chains" value="A/B/C/D=1-291"/>
</dbReference>
<dbReference type="PDB" id="8HBB">
    <property type="method" value="X-ray"/>
    <property type="resolution" value="3.09 A"/>
    <property type="chains" value="A/B/C/D=21-291"/>
</dbReference>
<dbReference type="PDBsum" id="8H68"/>
<dbReference type="PDBsum" id="8HAZ"/>
<dbReference type="PDBsum" id="8HB2"/>
<dbReference type="PDBsum" id="8HBB"/>
<dbReference type="SMR" id="Q8MNT9"/>
<dbReference type="DIP" id="DIP-26791N"/>
<dbReference type="FunCoup" id="Q8MNT9">
    <property type="interactions" value="2272"/>
</dbReference>
<dbReference type="STRING" id="6239.F09F7.7a.1"/>
<dbReference type="PaxDb" id="6239-F09F7.7a"/>
<dbReference type="PeptideAtlas" id="Q8MNT9"/>
<dbReference type="EnsemblMetazoa" id="F09F7.7a.1">
    <molecule id="Q8MNT9-1"/>
    <property type="protein sequence ID" value="F09F7.7a.1"/>
    <property type="gene ID" value="WBGene00017304"/>
</dbReference>
<dbReference type="EnsemblMetazoa" id="F09F7.7b.1">
    <molecule id="Q8MNT9-2"/>
    <property type="protein sequence ID" value="F09F7.7b.1"/>
    <property type="gene ID" value="WBGene00017304"/>
</dbReference>
<dbReference type="GeneID" id="175765"/>
<dbReference type="KEGG" id="cel:CELE_F09F7.7"/>
<dbReference type="UCSC" id="F09F7.7a">
    <property type="organism name" value="c. elegans"/>
</dbReference>
<dbReference type="AGR" id="WB:WBGene00017304"/>
<dbReference type="CTD" id="175765"/>
<dbReference type="WormBase" id="F09F7.7a">
    <molecule id="Q8MNT9-1"/>
    <property type="protein sequence ID" value="CE30655"/>
    <property type="gene ID" value="WBGene00017304"/>
    <property type="gene designation" value="nmad-1"/>
</dbReference>
<dbReference type="WormBase" id="F09F7.7b">
    <molecule id="Q8MNT9-2"/>
    <property type="protein sequence ID" value="CE30656"/>
    <property type="gene ID" value="WBGene00017304"/>
    <property type="gene designation" value="nmad-1"/>
</dbReference>
<dbReference type="eggNOG" id="KOG3959">
    <property type="taxonomic scope" value="Eukaryota"/>
</dbReference>
<dbReference type="GeneTree" id="ENSGT00390000006344"/>
<dbReference type="HOGENOM" id="CLU_060545_0_0_1"/>
<dbReference type="InParanoid" id="Q8MNT9"/>
<dbReference type="OMA" id="MCNLEYE"/>
<dbReference type="OrthoDB" id="442860at2759"/>
<dbReference type="PhylomeDB" id="Q8MNT9"/>
<dbReference type="PRO" id="PR:Q8MNT9"/>
<dbReference type="Proteomes" id="UP000001940">
    <property type="component" value="Chromosome III"/>
</dbReference>
<dbReference type="Bgee" id="WBGene00017304">
    <property type="expression patterns" value="Expressed in pharyngeal muscle cell (C elegans) and 4 other cell types or tissues"/>
</dbReference>
<dbReference type="GO" id="GO:0070938">
    <property type="term" value="C:contractile ring"/>
    <property type="evidence" value="ECO:0000318"/>
    <property type="project" value="GO_Central"/>
</dbReference>
<dbReference type="GO" id="GO:0030496">
    <property type="term" value="C:midbody"/>
    <property type="evidence" value="ECO:0000318"/>
    <property type="project" value="GO_Central"/>
</dbReference>
<dbReference type="GO" id="GO:0005634">
    <property type="term" value="C:nucleus"/>
    <property type="evidence" value="ECO:0007669"/>
    <property type="project" value="UniProtKB-SubCell"/>
</dbReference>
<dbReference type="GO" id="GO:0016706">
    <property type="term" value="F:2-oxoglutarate-dependent dioxygenase activity"/>
    <property type="evidence" value="ECO:0000318"/>
    <property type="project" value="GO_Central"/>
</dbReference>
<dbReference type="GO" id="GO:0032451">
    <property type="term" value="F:demethylase activity"/>
    <property type="evidence" value="ECO:0000318"/>
    <property type="project" value="GO_Central"/>
</dbReference>
<dbReference type="GO" id="GO:0141131">
    <property type="term" value="F:DNA N6-methyladenine demethylase activity"/>
    <property type="evidence" value="ECO:0000314"/>
    <property type="project" value="UniProtKB"/>
</dbReference>
<dbReference type="GO" id="GO:0046872">
    <property type="term" value="F:metal ion binding"/>
    <property type="evidence" value="ECO:0007669"/>
    <property type="project" value="UniProtKB-KW"/>
</dbReference>
<dbReference type="GO" id="GO:0031032">
    <property type="term" value="P:actomyosin structure organization"/>
    <property type="evidence" value="ECO:0000318"/>
    <property type="project" value="GO_Central"/>
</dbReference>
<dbReference type="GO" id="GO:0070988">
    <property type="term" value="P:demethylation"/>
    <property type="evidence" value="ECO:0007669"/>
    <property type="project" value="InterPro"/>
</dbReference>
<dbReference type="GO" id="GO:0006260">
    <property type="term" value="P:DNA replication"/>
    <property type="evidence" value="ECO:0000315"/>
    <property type="project" value="UniProtKB"/>
</dbReference>
<dbReference type="GO" id="GO:0010032">
    <property type="term" value="P:meiotic chromosome condensation"/>
    <property type="evidence" value="ECO:0000315"/>
    <property type="project" value="UniProtKB"/>
</dbReference>
<dbReference type="GO" id="GO:2001252">
    <property type="term" value="P:positive regulation of chromosome organization"/>
    <property type="evidence" value="ECO:0000315"/>
    <property type="project" value="UniProtKB"/>
</dbReference>
<dbReference type="GO" id="GO:2000781">
    <property type="term" value="P:positive regulation of double-strand break repair"/>
    <property type="evidence" value="ECO:0000315"/>
    <property type="project" value="UniProtKB"/>
</dbReference>
<dbReference type="GO" id="GO:1901046">
    <property type="term" value="P:positive regulation of egg-laying behavior"/>
    <property type="evidence" value="ECO:0000315"/>
    <property type="project" value="UniProtKB"/>
</dbReference>
<dbReference type="GO" id="GO:1905516">
    <property type="term" value="P:positive regulation of fertilization"/>
    <property type="evidence" value="ECO:0000315"/>
    <property type="project" value="UniProtKB"/>
</dbReference>
<dbReference type="GO" id="GO:0060903">
    <property type="term" value="P:positive regulation of meiosis I"/>
    <property type="evidence" value="ECO:0000315"/>
    <property type="project" value="UniProtKB"/>
</dbReference>
<dbReference type="FunFam" id="2.60.120.590:FF:000019">
    <property type="entry name" value="DNA N6-methyl adenine demethylase"/>
    <property type="match status" value="1"/>
</dbReference>
<dbReference type="Gene3D" id="2.60.120.590">
    <property type="entry name" value="Alpha-ketoglutarate-dependent dioxygenase AlkB-like"/>
    <property type="match status" value="1"/>
</dbReference>
<dbReference type="InterPro" id="IPR037151">
    <property type="entry name" value="AlkB-like_sf"/>
</dbReference>
<dbReference type="InterPro" id="IPR032857">
    <property type="entry name" value="ALKBH4"/>
</dbReference>
<dbReference type="PANTHER" id="PTHR12463:SF0">
    <property type="entry name" value="ALPHA-KETOGLUTARATE-DEPENDENT DIOXYGENASE ALKB HOMOLOG 4"/>
    <property type="match status" value="1"/>
</dbReference>
<dbReference type="PANTHER" id="PTHR12463">
    <property type="entry name" value="OXYGENASE-RELATED"/>
    <property type="match status" value="1"/>
</dbReference>
<dbReference type="SUPFAM" id="SSF51197">
    <property type="entry name" value="Clavaminate synthase-like"/>
    <property type="match status" value="1"/>
</dbReference>
<keyword id="KW-0002">3D-structure</keyword>
<keyword id="KW-0025">Alternative splicing</keyword>
<keyword id="KW-0223">Dioxygenase</keyword>
<keyword id="KW-0408">Iron</keyword>
<keyword id="KW-0479">Metal-binding</keyword>
<keyword id="KW-0539">Nucleus</keyword>
<keyword id="KW-0560">Oxidoreductase</keyword>
<keyword id="KW-1185">Reference proteome</keyword>
<comment type="function">
    <text evidence="3 4">Dioxygenase that specifically demethylates DNA methylated on the 6th position of adenine (N(6)-methyladenosine) DNA (PubMed:25936839). N(6)-methyladenosine (m6A) DNA is involved in epigenetic transgenerational inheritance (PubMed:25936839). Plays an essential role in DNA replication and repair in the germline during meiosis (PubMed:31283754). Binds to components of the DNA replication machinery such as top-2, and directs their localization to DNA to control DNA replication (PubMed:31283754).</text>
</comment>
<comment type="catalytic activity">
    <reaction evidence="7">
        <text>an N(6)-methyl-2'-deoxyadenosine in DNA + 2-oxoglutarate + O2 = a 2'-deoxyadenosine in DNA + formaldehyde + succinate + CO2</text>
        <dbReference type="Rhea" id="RHEA:49524"/>
        <dbReference type="Rhea" id="RHEA-COMP:12418"/>
        <dbReference type="Rhea" id="RHEA-COMP:12419"/>
        <dbReference type="ChEBI" id="CHEBI:15379"/>
        <dbReference type="ChEBI" id="CHEBI:16526"/>
        <dbReference type="ChEBI" id="CHEBI:16810"/>
        <dbReference type="ChEBI" id="CHEBI:16842"/>
        <dbReference type="ChEBI" id="CHEBI:30031"/>
        <dbReference type="ChEBI" id="CHEBI:90615"/>
        <dbReference type="ChEBI" id="CHEBI:90616"/>
        <dbReference type="EC" id="1.14.11.51"/>
    </reaction>
</comment>
<comment type="cofactor">
    <cofactor evidence="1">
        <name>Fe(2+)</name>
        <dbReference type="ChEBI" id="CHEBI:29033"/>
    </cofactor>
    <text evidence="1">Binds 1 Fe(2+) ion per subunit.</text>
</comment>
<comment type="subunit">
    <text evidence="4">Interacts with top-2; the interaction is required for localization of top-2 to DNA (PubMed:31283754). Also interacts with mtss-1, his-24, ule-3, C18B2.3, pgl-1, ceh-93, mcm-4 and F37C4.5 (PubMed:31283754).</text>
</comment>
<comment type="subcellular location">
    <subcellularLocation>
        <location evidence="8">Nucleus</location>
    </subcellularLocation>
    <text evidence="8">May co-localize with top-2 on DNA.</text>
</comment>
<comment type="alternative products">
    <event type="alternative splicing"/>
    <isoform>
        <id>Q8MNT9-1</id>
        <name evidence="9">a</name>
        <sequence type="displayed"/>
    </isoform>
    <isoform>
        <id>Q8MNT9-2</id>
        <name evidence="10">b</name>
        <sequence type="described" ref="VSP_057825 VSP_057826"/>
    </isoform>
</comment>
<comment type="disruption phenotype">
    <text evidence="3">Mutants lay fewer eggs.</text>
</comment>
<comment type="similarity">
    <text evidence="6">Belongs to the alkB family.</text>
</comment>
<evidence type="ECO:0000250" key="1">
    <source>
        <dbReference type="UniProtKB" id="Q96BT7"/>
    </source>
</evidence>
<evidence type="ECO:0000255" key="2">
    <source>
        <dbReference type="PROSITE-ProRule" id="PRU00805"/>
    </source>
</evidence>
<evidence type="ECO:0000269" key="3">
    <source>
    </source>
</evidence>
<evidence type="ECO:0000269" key="4">
    <source>
    </source>
</evidence>
<evidence type="ECO:0000303" key="5">
    <source>
    </source>
</evidence>
<evidence type="ECO:0000305" key="6"/>
<evidence type="ECO:0000305" key="7">
    <source>
    </source>
</evidence>
<evidence type="ECO:0000305" key="8">
    <source>
    </source>
</evidence>
<evidence type="ECO:0000312" key="9">
    <source>
        <dbReference type="WormBase" id="F09F7.7a"/>
    </source>
</evidence>
<evidence type="ECO:0000312" key="10">
    <source>
        <dbReference type="WormBase" id="F09F7.7b"/>
    </source>
</evidence>
<evidence type="ECO:0007829" key="11">
    <source>
        <dbReference type="PDB" id="8H68"/>
    </source>
</evidence>
<protein>
    <recommendedName>
        <fullName evidence="6">DNA N6-methyl adenine demethylase</fullName>
        <ecNumber evidence="7">1.14.11.51</ecNumber>
    </recommendedName>
    <alternativeName>
        <fullName evidence="5">N6-methyl adenine demethylase 1</fullName>
    </alternativeName>
</protein>
<gene>
    <name evidence="5 9" type="primary">nmad-1</name>
    <name evidence="9" type="ORF">F09F7.7</name>
</gene>